<name>DTD_STAAM</name>
<keyword id="KW-0963">Cytoplasm</keyword>
<keyword id="KW-0378">Hydrolase</keyword>
<keyword id="KW-0694">RNA-binding</keyword>
<keyword id="KW-0820">tRNA-binding</keyword>
<reference key="1">
    <citation type="journal article" date="2001" name="Lancet">
        <title>Whole genome sequencing of meticillin-resistant Staphylococcus aureus.</title>
        <authorList>
            <person name="Kuroda M."/>
            <person name="Ohta T."/>
            <person name="Uchiyama I."/>
            <person name="Baba T."/>
            <person name="Yuzawa H."/>
            <person name="Kobayashi I."/>
            <person name="Cui L."/>
            <person name="Oguchi A."/>
            <person name="Aoki K."/>
            <person name="Nagai Y."/>
            <person name="Lian J.-Q."/>
            <person name="Ito T."/>
            <person name="Kanamori M."/>
            <person name="Matsumaru H."/>
            <person name="Maruyama A."/>
            <person name="Murakami H."/>
            <person name="Hosoyama A."/>
            <person name="Mizutani-Ui Y."/>
            <person name="Takahashi N.K."/>
            <person name="Sawano T."/>
            <person name="Inoue R."/>
            <person name="Kaito C."/>
            <person name="Sekimizu K."/>
            <person name="Hirakawa H."/>
            <person name="Kuhara S."/>
            <person name="Goto S."/>
            <person name="Yabuzaki J."/>
            <person name="Kanehisa M."/>
            <person name="Yamashita A."/>
            <person name="Oshima K."/>
            <person name="Furuya K."/>
            <person name="Yoshino C."/>
            <person name="Shiba T."/>
            <person name="Hattori M."/>
            <person name="Ogasawara N."/>
            <person name="Hayashi H."/>
            <person name="Hiramatsu K."/>
        </authorList>
    </citation>
    <scope>NUCLEOTIDE SEQUENCE [LARGE SCALE GENOMIC DNA]</scope>
    <source>
        <strain>Mu50 / ATCC 700699</strain>
    </source>
</reference>
<feature type="chain" id="PRO_0000164587" description="D-aminoacyl-tRNA deacylase">
    <location>
        <begin position="1"/>
        <end position="150"/>
    </location>
</feature>
<feature type="short sequence motif" description="Gly-cisPro motif, important for rejection of L-amino acids" evidence="1">
    <location>
        <begin position="136"/>
        <end position="137"/>
    </location>
</feature>
<organism>
    <name type="scientific">Staphylococcus aureus (strain Mu50 / ATCC 700699)</name>
    <dbReference type="NCBI Taxonomy" id="158878"/>
    <lineage>
        <taxon>Bacteria</taxon>
        <taxon>Bacillati</taxon>
        <taxon>Bacillota</taxon>
        <taxon>Bacilli</taxon>
        <taxon>Bacillales</taxon>
        <taxon>Staphylococcaceae</taxon>
        <taxon>Staphylococcus</taxon>
    </lineage>
</organism>
<proteinExistence type="inferred from homology"/>
<sequence>MKVVVQRVKEASVTNDTLNNQIKKGYCLLVGIGQNSTEQDADVIAKKIANARLFEDDNNKLNFNIQQMNGEILSVSQFTLYADVKKGNRPGFSNSKNPDQAVKIYEYFNDALRAYGLTVKTGEFGTHMNVSINNDGPVTIIYESQDGKIQ</sequence>
<comment type="function">
    <text evidence="1">An aminoacyl-tRNA editing enzyme that deacylates mischarged D-aminoacyl-tRNAs. Also deacylates mischarged glycyl-tRNA(Ala), protecting cells against glycine mischarging by AlaRS. Acts via tRNA-based rather than protein-based catalysis; rejects L-amino acids rather than detecting D-amino acids in the active site. By recycling D-aminoacyl-tRNA to D-amino acids and free tRNA molecules, this enzyme counteracts the toxicity associated with the formation of D-aminoacyl-tRNA entities in vivo and helps enforce protein L-homochirality.</text>
</comment>
<comment type="catalytic activity">
    <reaction evidence="1">
        <text>glycyl-tRNA(Ala) + H2O = tRNA(Ala) + glycine + H(+)</text>
        <dbReference type="Rhea" id="RHEA:53744"/>
        <dbReference type="Rhea" id="RHEA-COMP:9657"/>
        <dbReference type="Rhea" id="RHEA-COMP:13640"/>
        <dbReference type="ChEBI" id="CHEBI:15377"/>
        <dbReference type="ChEBI" id="CHEBI:15378"/>
        <dbReference type="ChEBI" id="CHEBI:57305"/>
        <dbReference type="ChEBI" id="CHEBI:78442"/>
        <dbReference type="ChEBI" id="CHEBI:78522"/>
        <dbReference type="EC" id="3.1.1.96"/>
    </reaction>
</comment>
<comment type="catalytic activity">
    <reaction evidence="1">
        <text>a D-aminoacyl-tRNA + H2O = a tRNA + a D-alpha-amino acid + H(+)</text>
        <dbReference type="Rhea" id="RHEA:13953"/>
        <dbReference type="Rhea" id="RHEA-COMP:10123"/>
        <dbReference type="Rhea" id="RHEA-COMP:10124"/>
        <dbReference type="ChEBI" id="CHEBI:15377"/>
        <dbReference type="ChEBI" id="CHEBI:15378"/>
        <dbReference type="ChEBI" id="CHEBI:59871"/>
        <dbReference type="ChEBI" id="CHEBI:78442"/>
        <dbReference type="ChEBI" id="CHEBI:79333"/>
        <dbReference type="EC" id="3.1.1.96"/>
    </reaction>
</comment>
<comment type="subunit">
    <text evidence="1">Homodimer.</text>
</comment>
<comment type="subcellular location">
    <subcellularLocation>
        <location evidence="1">Cytoplasm</location>
    </subcellularLocation>
</comment>
<comment type="domain">
    <text evidence="1">A Gly-cisPro motif from one monomer fits into the active site of the other monomer to allow specific chiral rejection of L-amino acids.</text>
</comment>
<comment type="similarity">
    <text evidence="1">Belongs to the DTD family.</text>
</comment>
<gene>
    <name evidence="1" type="primary">dtd</name>
    <name type="ordered locus">SAV1633</name>
</gene>
<protein>
    <recommendedName>
        <fullName evidence="1">D-aminoacyl-tRNA deacylase</fullName>
        <shortName evidence="1">DTD</shortName>
        <ecNumber evidence="1">3.1.1.96</ecNumber>
    </recommendedName>
    <alternativeName>
        <fullName evidence="1">Gly-tRNA(Ala) deacylase</fullName>
    </alternativeName>
</protein>
<accession>P0A025</accession>
<accession>O32420</accession>
<dbReference type="EC" id="3.1.1.96" evidence="1"/>
<dbReference type="EMBL" id="BA000017">
    <property type="protein sequence ID" value="BAB57795.1"/>
    <property type="molecule type" value="Genomic_DNA"/>
</dbReference>
<dbReference type="RefSeq" id="WP_000869983.1">
    <property type="nucleotide sequence ID" value="NC_002758.2"/>
</dbReference>
<dbReference type="SMR" id="P0A025"/>
<dbReference type="KEGG" id="sav:SAV1633"/>
<dbReference type="HOGENOM" id="CLU_076901_1_0_9"/>
<dbReference type="PhylomeDB" id="P0A025"/>
<dbReference type="Proteomes" id="UP000002481">
    <property type="component" value="Chromosome"/>
</dbReference>
<dbReference type="GO" id="GO:0005737">
    <property type="term" value="C:cytoplasm"/>
    <property type="evidence" value="ECO:0007669"/>
    <property type="project" value="UniProtKB-SubCell"/>
</dbReference>
<dbReference type="GO" id="GO:0051500">
    <property type="term" value="F:D-tyrosyl-tRNA(Tyr) deacylase activity"/>
    <property type="evidence" value="ECO:0007669"/>
    <property type="project" value="TreeGrafter"/>
</dbReference>
<dbReference type="GO" id="GO:0106026">
    <property type="term" value="F:Gly-tRNA(Ala) deacylase activity"/>
    <property type="evidence" value="ECO:0007669"/>
    <property type="project" value="UniProtKB-UniRule"/>
</dbReference>
<dbReference type="GO" id="GO:0043908">
    <property type="term" value="F:Ser(Gly)-tRNA(Ala) hydrolase activity"/>
    <property type="evidence" value="ECO:0007669"/>
    <property type="project" value="UniProtKB-UniRule"/>
</dbReference>
<dbReference type="GO" id="GO:0000049">
    <property type="term" value="F:tRNA binding"/>
    <property type="evidence" value="ECO:0007669"/>
    <property type="project" value="UniProtKB-UniRule"/>
</dbReference>
<dbReference type="GO" id="GO:0019478">
    <property type="term" value="P:D-amino acid catabolic process"/>
    <property type="evidence" value="ECO:0007669"/>
    <property type="project" value="UniProtKB-UniRule"/>
</dbReference>
<dbReference type="FunFam" id="3.50.80.10:FF:000005">
    <property type="entry name" value="D-aminoacyl-tRNA deacylase"/>
    <property type="match status" value="1"/>
</dbReference>
<dbReference type="Gene3D" id="3.50.80.10">
    <property type="entry name" value="D-tyrosyl-tRNA(Tyr) deacylase"/>
    <property type="match status" value="1"/>
</dbReference>
<dbReference type="HAMAP" id="MF_00518">
    <property type="entry name" value="Deacylase_Dtd"/>
    <property type="match status" value="1"/>
</dbReference>
<dbReference type="InterPro" id="IPR003732">
    <property type="entry name" value="Daa-tRNA_deacyls_DTD"/>
</dbReference>
<dbReference type="InterPro" id="IPR023509">
    <property type="entry name" value="DTD-like_sf"/>
</dbReference>
<dbReference type="NCBIfam" id="TIGR00256">
    <property type="entry name" value="D-aminoacyl-tRNA deacylase"/>
    <property type="match status" value="1"/>
</dbReference>
<dbReference type="PANTHER" id="PTHR10472:SF5">
    <property type="entry name" value="D-AMINOACYL-TRNA DEACYLASE 1"/>
    <property type="match status" value="1"/>
</dbReference>
<dbReference type="PANTHER" id="PTHR10472">
    <property type="entry name" value="D-TYROSYL-TRNA TYR DEACYLASE"/>
    <property type="match status" value="1"/>
</dbReference>
<dbReference type="Pfam" id="PF02580">
    <property type="entry name" value="Tyr_Deacylase"/>
    <property type="match status" value="1"/>
</dbReference>
<dbReference type="SUPFAM" id="SSF69500">
    <property type="entry name" value="DTD-like"/>
    <property type="match status" value="1"/>
</dbReference>
<evidence type="ECO:0000255" key="1">
    <source>
        <dbReference type="HAMAP-Rule" id="MF_00518"/>
    </source>
</evidence>